<accession>P46384</accession>
<keyword id="KW-0597">Phosphoprotein</keyword>
<keyword id="KW-1185">Reference proteome</keyword>
<keyword id="KW-0902">Two-component regulatory system</keyword>
<gene>
    <name type="primary">pilG</name>
    <name type="ordered locus">PA0408</name>
</gene>
<comment type="function">
    <text evidence="2 3 4">Plays an essential role in both cAMP-dependent and independent regulation of twitching motility (PubMed:28583947). Regulates the cAMP-independent coordination of type IV pilus (T4P) biogenesis and retraction that plays a role in surface and host cell adhesion, colonization, biofilm maturation, virulence, and twitching (PubMed:20345659, PubMed:28583947). In addition, phosphorylated PilG is necessary for cAMP production via regulation of the adenylate cyclase CyaB. Acts therefore as a response regulator of the chemosensory system/Chp system (PubMed:20345659, PubMed:27354279).</text>
</comment>
<comment type="PTM">
    <text evidence="3">Phosphorylated.</text>
</comment>
<comment type="disruption phenotype">
    <text evidence="2 3">Deletion results in decreased cAMP, surface piliation, and twitching motility (PubMed:20345659, PubMed:27354279). Supplementation of pilG mutant with exogenous cAMP restores surface piliation but not twitching motility, suggesting that PilG regulates pilus biogenesis and function by at least two pathways (PubMed:20345659).</text>
</comment>
<evidence type="ECO:0000255" key="1">
    <source>
        <dbReference type="PROSITE-ProRule" id="PRU00169"/>
    </source>
</evidence>
<evidence type="ECO:0000269" key="2">
    <source>
    </source>
</evidence>
<evidence type="ECO:0000269" key="3">
    <source>
    </source>
</evidence>
<evidence type="ECO:0000269" key="4">
    <source>
    </source>
</evidence>
<proteinExistence type="evidence at protein level"/>
<dbReference type="EMBL" id="L10831">
    <property type="protein sequence ID" value="AAA03067.1"/>
    <property type="molecule type" value="Unassigned_DNA"/>
</dbReference>
<dbReference type="EMBL" id="AE004091">
    <property type="protein sequence ID" value="AAG03797.1"/>
    <property type="molecule type" value="Genomic_DNA"/>
</dbReference>
<dbReference type="PIR" id="A48491">
    <property type="entry name" value="A48491"/>
</dbReference>
<dbReference type="RefSeq" id="NP_249099.1">
    <property type="nucleotide sequence ID" value="NC_002516.2"/>
</dbReference>
<dbReference type="RefSeq" id="WP_003084583.1">
    <property type="nucleotide sequence ID" value="NZ_QZGE01000016.1"/>
</dbReference>
<dbReference type="SMR" id="P46384"/>
<dbReference type="STRING" id="208964.PA0408"/>
<dbReference type="PaxDb" id="208964-PA0408"/>
<dbReference type="DNASU" id="878203"/>
<dbReference type="GeneID" id="878203"/>
<dbReference type="KEGG" id="pae:PA0408"/>
<dbReference type="PATRIC" id="fig|208964.12.peg.429"/>
<dbReference type="PseudoCAP" id="PA0408"/>
<dbReference type="HOGENOM" id="CLU_000445_69_17_6"/>
<dbReference type="InParanoid" id="P46384"/>
<dbReference type="OrthoDB" id="9800897at2"/>
<dbReference type="PhylomeDB" id="P46384"/>
<dbReference type="BioCyc" id="PAER208964:G1FZ6-412-MONOMER"/>
<dbReference type="Proteomes" id="UP000002438">
    <property type="component" value="Chromosome"/>
</dbReference>
<dbReference type="GO" id="GO:0000160">
    <property type="term" value="P:phosphorelay signal transduction system"/>
    <property type="evidence" value="ECO:0007669"/>
    <property type="project" value="UniProtKB-KW"/>
</dbReference>
<dbReference type="Gene3D" id="3.40.50.2300">
    <property type="match status" value="1"/>
</dbReference>
<dbReference type="InterPro" id="IPR050595">
    <property type="entry name" value="Bact_response_regulator"/>
</dbReference>
<dbReference type="InterPro" id="IPR011006">
    <property type="entry name" value="CheY-like_superfamily"/>
</dbReference>
<dbReference type="InterPro" id="IPR001789">
    <property type="entry name" value="Sig_transdc_resp-reg_receiver"/>
</dbReference>
<dbReference type="PANTHER" id="PTHR44591:SF14">
    <property type="entry name" value="PROTEIN PILG"/>
    <property type="match status" value="1"/>
</dbReference>
<dbReference type="PANTHER" id="PTHR44591">
    <property type="entry name" value="STRESS RESPONSE REGULATOR PROTEIN 1"/>
    <property type="match status" value="1"/>
</dbReference>
<dbReference type="Pfam" id="PF00072">
    <property type="entry name" value="Response_reg"/>
    <property type="match status" value="1"/>
</dbReference>
<dbReference type="SMART" id="SM00448">
    <property type="entry name" value="REC"/>
    <property type="match status" value="1"/>
</dbReference>
<dbReference type="SUPFAM" id="SSF52172">
    <property type="entry name" value="CheY-like"/>
    <property type="match status" value="1"/>
</dbReference>
<dbReference type="PROSITE" id="PS50110">
    <property type="entry name" value="RESPONSE_REGULATORY"/>
    <property type="match status" value="1"/>
</dbReference>
<reference key="1">
    <citation type="journal article" date="1993" name="J. Bacteriol.">
        <title>The pilG gene product, required for Pseudomonas aeruginosa pilus production and twitching motility, is homologous to the enteric, single-domain response regulator CheY.</title>
        <authorList>
            <person name="Darzins A."/>
        </authorList>
    </citation>
    <scope>NUCLEOTIDE SEQUENCE [GENOMIC DNA]</scope>
    <source>
        <strain>ATCC 15692 / DSM 22644 / CIP 104116 / JCM 14847 / LMG 12228 / 1C / PRS 101 / PAO1</strain>
    </source>
</reference>
<reference key="2">
    <citation type="journal article" date="2000" name="Nature">
        <title>Complete genome sequence of Pseudomonas aeruginosa PAO1, an opportunistic pathogen.</title>
        <authorList>
            <person name="Stover C.K."/>
            <person name="Pham X.-Q.T."/>
            <person name="Erwin A.L."/>
            <person name="Mizoguchi S.D."/>
            <person name="Warrener P."/>
            <person name="Hickey M.J."/>
            <person name="Brinkman F.S.L."/>
            <person name="Hufnagle W.O."/>
            <person name="Kowalik D.J."/>
            <person name="Lagrou M."/>
            <person name="Garber R.L."/>
            <person name="Goltry L."/>
            <person name="Tolentino E."/>
            <person name="Westbrock-Wadman S."/>
            <person name="Yuan Y."/>
            <person name="Brody L.L."/>
            <person name="Coulter S.N."/>
            <person name="Folger K.R."/>
            <person name="Kas A."/>
            <person name="Larbig K."/>
            <person name="Lim R.M."/>
            <person name="Smith K.A."/>
            <person name="Spencer D.H."/>
            <person name="Wong G.K.-S."/>
            <person name="Wu Z."/>
            <person name="Paulsen I.T."/>
            <person name="Reizer J."/>
            <person name="Saier M.H. Jr."/>
            <person name="Hancock R.E.W."/>
            <person name="Lory S."/>
            <person name="Olson M.V."/>
        </authorList>
    </citation>
    <scope>NUCLEOTIDE SEQUENCE [LARGE SCALE GENOMIC DNA]</scope>
    <source>
        <strain>ATCC 15692 / DSM 22644 / CIP 104116 / JCM 14847 / LMG 12228 / 1C / PRS 101 / PAO1</strain>
    </source>
</reference>
<reference key="3">
    <citation type="journal article" date="2010" name="Mol. Microbiol.">
        <title>The Pseudomonas aeruginosa Chp chemosensory system regulates intracellular cAMP levels by modulating adenylate cyclase activity.</title>
        <authorList>
            <person name="Fulcher N.B."/>
            <person name="Holliday P.M."/>
            <person name="Klem E."/>
            <person name="Cann M.J."/>
            <person name="Wolfgang M.C."/>
        </authorList>
    </citation>
    <scope>FUNCTION</scope>
    <scope>DISRUPTION PHENOTYPE</scope>
</reference>
<reference key="4">
    <citation type="journal article" date="2016" name="J. Biol. Chem.">
        <title>Phosphoryl Group Flow within the Pseudomonas aeruginosa Pil-Chp Chemosensory System: DIFFERENTIAL FUNCTION OF THE EIGHT PHOSPHOTRANSFERASE AND THREE RECEIVER DOMAINS.</title>
        <authorList>
            <person name="Silversmith R.E."/>
            <person name="Wang B."/>
            <person name="Fulcher N.B."/>
            <person name="Wolfgang M.C."/>
            <person name="Bourret R.B."/>
        </authorList>
    </citation>
    <scope>PHOSPHORYLATION</scope>
    <scope>FUNCTION</scope>
    <scope>DISRUPTION PHENOTYPE</scope>
</reference>
<reference key="5">
    <citation type="journal article" date="2017" name="J. Bacteriol.">
        <title>Cyclic AMP-Independent Control of Twitching Motility in Pseudomonas aeruginosa.</title>
        <authorList>
            <person name="Buensuceso R.N.C."/>
            <person name="Daniel-Ivad M."/>
            <person name="Kilmury S.L.N."/>
            <person name="Leighton T.L."/>
            <person name="Harvey H."/>
            <person name="Howell P.L."/>
            <person name="Burrows L.L."/>
        </authorList>
    </citation>
    <scope>FUNCTION</scope>
</reference>
<protein>
    <recommendedName>
        <fullName>Protein PilG</fullName>
    </recommendedName>
</protein>
<organism>
    <name type="scientific">Pseudomonas aeruginosa (strain ATCC 15692 / DSM 22644 / CIP 104116 / JCM 14847 / LMG 12228 / 1C / PRS 101 / PAO1)</name>
    <dbReference type="NCBI Taxonomy" id="208964"/>
    <lineage>
        <taxon>Bacteria</taxon>
        <taxon>Pseudomonadati</taxon>
        <taxon>Pseudomonadota</taxon>
        <taxon>Gammaproteobacteria</taxon>
        <taxon>Pseudomonadales</taxon>
        <taxon>Pseudomonadaceae</taxon>
        <taxon>Pseudomonas</taxon>
    </lineage>
</organism>
<feature type="chain" id="PRO_0000081203" description="Protein PilG">
    <location>
        <begin position="1"/>
        <end position="135"/>
    </location>
</feature>
<feature type="domain" description="Response regulatory" evidence="1">
    <location>
        <begin position="9"/>
        <end position="125"/>
    </location>
</feature>
<feature type="modified residue" description="4-aspartylphosphate" evidence="1">
    <location>
        <position position="58"/>
    </location>
</feature>
<name>PILG_PSEAE</name>
<sequence length="135" mass="14718">MEQQSDGLKVMVIDDSKTIRRTAETLLKKVGCDVITAIDGFDALAKIADTHPNIIFVDIMMPRLDGYQTCALIKNNSAFKSTPVIMLSSKDGLFDKAKGRIVGSDQYLTKPFSKEELLGAIKAHVPSFTPVDAVS</sequence>